<proteinExistence type="inferred from homology"/>
<gene>
    <name evidence="1" type="primary">tap</name>
    <name type="ordered locus">MT1297</name>
</gene>
<sequence length="419" mass="43287">MRNSNRGPAFLILFATLMAAAGDGVSIVAFPWLVLQREGSAGQASIVASATMLPLLFATLVAGTAVDYFGRRRVSMVADALSGAAVAGVPLVAWGYGGDAVNVLVLAVLAALAAAFGPAGMTARDSMLPEAAARAGWSLDRINGAYEAILNLAFIVGPAIGGLMIATVGGITTMWITATAFGLSILAIAALQLEGAGKPHHTSRPQGLVSGIAEGLRFVWNLRVLRTLGMIDLTVTALYLPMESVLFPKYFTDHQQPVQLGWALMAIAGGGLVGALGYAVLAIRVPRRVTMSTAVLTLGLASMVIAFLPPLPVIMVLCAVVGLVYGPIQPIYNYVIQTRAAQHLRGRVVGVMTSLAYAAGPLGLLLAGPLTDAAGLHATFLALALPIVCTGLVAIRLPALRELDLAPQADIDRPVGSAQ</sequence>
<protein>
    <recommendedName>
        <fullName evidence="1">Multidrug efflux pump Tap</fullName>
    </recommendedName>
</protein>
<reference key="1">
    <citation type="journal article" date="2002" name="J. Bacteriol.">
        <title>Whole-genome comparison of Mycobacterium tuberculosis clinical and laboratory strains.</title>
        <authorList>
            <person name="Fleischmann R.D."/>
            <person name="Alland D."/>
            <person name="Eisen J.A."/>
            <person name="Carpenter L."/>
            <person name="White O."/>
            <person name="Peterson J.D."/>
            <person name="DeBoy R.T."/>
            <person name="Dodson R.J."/>
            <person name="Gwinn M.L."/>
            <person name="Haft D.H."/>
            <person name="Hickey E.K."/>
            <person name="Kolonay J.F."/>
            <person name="Nelson W.C."/>
            <person name="Umayam L.A."/>
            <person name="Ermolaeva M.D."/>
            <person name="Salzberg S.L."/>
            <person name="Delcher A."/>
            <person name="Utterback T.R."/>
            <person name="Weidman J.F."/>
            <person name="Khouri H.M."/>
            <person name="Gill J."/>
            <person name="Mikula A."/>
            <person name="Bishai W."/>
            <person name="Jacobs W.R. Jr."/>
            <person name="Venter J.C."/>
            <person name="Fraser C.M."/>
        </authorList>
    </citation>
    <scope>NUCLEOTIDE SEQUENCE [LARGE SCALE GENOMIC DNA]</scope>
    <source>
        <strain>CDC 1551 / Oshkosh</strain>
    </source>
</reference>
<feature type="chain" id="PRO_0000427752" description="Multidrug efflux pump Tap">
    <location>
        <begin position="1"/>
        <end position="419"/>
    </location>
</feature>
<feature type="transmembrane region" description="Helical" evidence="2">
    <location>
        <begin position="7"/>
        <end position="29"/>
    </location>
</feature>
<feature type="transmembrane region" description="Helical" evidence="2">
    <location>
        <begin position="44"/>
        <end position="66"/>
    </location>
</feature>
<feature type="transmembrane region" description="Helical" evidence="2">
    <location>
        <begin position="73"/>
        <end position="95"/>
    </location>
</feature>
<feature type="transmembrane region" description="Helical" evidence="2">
    <location>
        <begin position="100"/>
        <end position="122"/>
    </location>
</feature>
<feature type="transmembrane region" description="Helical" evidence="2">
    <location>
        <begin position="149"/>
        <end position="171"/>
    </location>
</feature>
<feature type="transmembrane region" description="Helical" evidence="2">
    <location>
        <begin position="175"/>
        <end position="197"/>
    </location>
</feature>
<feature type="transmembrane region" description="Helical" evidence="2">
    <location>
        <begin position="218"/>
        <end position="240"/>
    </location>
</feature>
<feature type="transmembrane region" description="Helical" evidence="2">
    <location>
        <begin position="260"/>
        <end position="282"/>
    </location>
</feature>
<feature type="transmembrane region" description="Helical" evidence="2">
    <location>
        <begin position="289"/>
        <end position="308"/>
    </location>
</feature>
<feature type="transmembrane region" description="Helical" evidence="2">
    <location>
        <begin position="313"/>
        <end position="335"/>
    </location>
</feature>
<feature type="transmembrane region" description="Helical" evidence="2">
    <location>
        <begin position="348"/>
        <end position="370"/>
    </location>
</feature>
<feature type="transmembrane region" description="Helical" evidence="2">
    <location>
        <begin position="375"/>
        <end position="397"/>
    </location>
</feature>
<organism>
    <name type="scientific">Mycobacterium tuberculosis (strain CDC 1551 / Oshkosh)</name>
    <dbReference type="NCBI Taxonomy" id="83331"/>
    <lineage>
        <taxon>Bacteria</taxon>
        <taxon>Bacillati</taxon>
        <taxon>Actinomycetota</taxon>
        <taxon>Actinomycetes</taxon>
        <taxon>Mycobacteriales</taxon>
        <taxon>Mycobacteriaceae</taxon>
        <taxon>Mycobacterium</taxon>
        <taxon>Mycobacterium tuberculosis complex</taxon>
    </lineage>
</organism>
<comment type="function">
    <text evidence="1">Efflux pump that contributes to intrinsic antibiotic resistance. The pump uses the electrochemical gradient as a source of energy.</text>
</comment>
<comment type="subcellular location">
    <subcellularLocation>
        <location evidence="1">Cell inner membrane</location>
        <topology evidence="2">Multi-pass membrane protein</topology>
    </subcellularLocation>
</comment>
<comment type="similarity">
    <text evidence="3">Belongs to the major facilitator superfamily. Drug:H(+) antiporter-3 (DHA3) (TC 2.A.1.21) family.</text>
</comment>
<dbReference type="EMBL" id="AE000516">
    <property type="protein sequence ID" value="AAK45555.1"/>
    <property type="molecule type" value="Genomic_DNA"/>
</dbReference>
<dbReference type="PIR" id="B70753">
    <property type="entry name" value="B70753"/>
</dbReference>
<dbReference type="RefSeq" id="WP_003406359.1">
    <property type="nucleotide sequence ID" value="NZ_KK341227.1"/>
</dbReference>
<dbReference type="SMR" id="P9WJX8"/>
<dbReference type="KEGG" id="mtc:MT1297"/>
<dbReference type="PATRIC" id="fig|83331.31.peg.1400"/>
<dbReference type="HOGENOM" id="CLU_034180_2_0_11"/>
<dbReference type="Proteomes" id="UP000001020">
    <property type="component" value="Chromosome"/>
</dbReference>
<dbReference type="GO" id="GO:0005886">
    <property type="term" value="C:plasma membrane"/>
    <property type="evidence" value="ECO:0007669"/>
    <property type="project" value="UniProtKB-SubCell"/>
</dbReference>
<dbReference type="GO" id="GO:0022857">
    <property type="term" value="F:transmembrane transporter activity"/>
    <property type="evidence" value="ECO:0007669"/>
    <property type="project" value="InterPro"/>
</dbReference>
<dbReference type="GO" id="GO:0046677">
    <property type="term" value="P:response to antibiotic"/>
    <property type="evidence" value="ECO:0007669"/>
    <property type="project" value="UniProtKB-KW"/>
</dbReference>
<dbReference type="CDD" id="cd06173">
    <property type="entry name" value="MFS_MefA_like"/>
    <property type="match status" value="1"/>
</dbReference>
<dbReference type="Gene3D" id="1.20.1250.20">
    <property type="entry name" value="MFS general substrate transporter like domains"/>
    <property type="match status" value="2"/>
</dbReference>
<dbReference type="InterPro" id="IPR011701">
    <property type="entry name" value="MFS"/>
</dbReference>
<dbReference type="InterPro" id="IPR020846">
    <property type="entry name" value="MFS_dom"/>
</dbReference>
<dbReference type="InterPro" id="IPR036259">
    <property type="entry name" value="MFS_trans_sf"/>
</dbReference>
<dbReference type="PANTHER" id="PTHR23513:SF9">
    <property type="entry name" value="ENTEROBACTIN EXPORTER ENTS"/>
    <property type="match status" value="1"/>
</dbReference>
<dbReference type="PANTHER" id="PTHR23513">
    <property type="entry name" value="INTEGRAL MEMBRANE EFFLUX PROTEIN-RELATED"/>
    <property type="match status" value="1"/>
</dbReference>
<dbReference type="Pfam" id="PF07690">
    <property type="entry name" value="MFS_1"/>
    <property type="match status" value="1"/>
</dbReference>
<dbReference type="SUPFAM" id="SSF103473">
    <property type="entry name" value="MFS general substrate transporter"/>
    <property type="match status" value="1"/>
</dbReference>
<dbReference type="PROSITE" id="PS50850">
    <property type="entry name" value="MFS"/>
    <property type="match status" value="1"/>
</dbReference>
<keyword id="KW-0046">Antibiotic resistance</keyword>
<keyword id="KW-0997">Cell inner membrane</keyword>
<keyword id="KW-1003">Cell membrane</keyword>
<keyword id="KW-0472">Membrane</keyword>
<keyword id="KW-1185">Reference proteome</keyword>
<keyword id="KW-0812">Transmembrane</keyword>
<keyword id="KW-1133">Transmembrane helix</keyword>
<keyword id="KW-0813">Transport</keyword>
<name>TAP_MYCTO</name>
<evidence type="ECO:0000250" key="1">
    <source>
        <dbReference type="UniProtKB" id="O32859"/>
    </source>
</evidence>
<evidence type="ECO:0000255" key="2"/>
<evidence type="ECO:0000305" key="3"/>
<accession>P9WJX8</accession>
<accession>L0T8U8</accession>
<accession>P64783</accession>
<accession>Q11060</accession>